<reference key="1">
    <citation type="journal article" date="2004" name="J. Bacteriol.">
        <title>Complete genome sequence of the genetically tractable hydrogenotrophic methanogen Methanococcus maripaludis.</title>
        <authorList>
            <person name="Hendrickson E.L."/>
            <person name="Kaul R."/>
            <person name="Zhou Y."/>
            <person name="Bovee D."/>
            <person name="Chapman P."/>
            <person name="Chung J."/>
            <person name="Conway de Macario E."/>
            <person name="Dodsworth J.A."/>
            <person name="Gillett W."/>
            <person name="Graham D.E."/>
            <person name="Hackett M."/>
            <person name="Haydock A.K."/>
            <person name="Kang A."/>
            <person name="Land M.L."/>
            <person name="Levy R."/>
            <person name="Lie T.J."/>
            <person name="Major T.A."/>
            <person name="Moore B.C."/>
            <person name="Porat I."/>
            <person name="Palmeiri A."/>
            <person name="Rouse G."/>
            <person name="Saenphimmachak C."/>
            <person name="Soell D."/>
            <person name="Van Dien S."/>
            <person name="Wang T."/>
            <person name="Whitman W.B."/>
            <person name="Xia Q."/>
            <person name="Zhang Y."/>
            <person name="Larimer F.W."/>
            <person name="Olson M.V."/>
            <person name="Leigh J.A."/>
        </authorList>
    </citation>
    <scope>NUCLEOTIDE SEQUENCE [LARGE SCALE GENOMIC DNA]</scope>
    <source>
        <strain>DSM 14266 / JCM 13030 / NBRC 101832 / S2 / LL</strain>
    </source>
</reference>
<sequence length="109" mass="12256">MRILLKLFVESQNLGKAINALSEGGISGFYLKEYQGMSPDDWKGFLLAEEPEMAIKIVNELSQDTVVINSIVNIECLGKIKELVRKKLENDRYTLVELPVLGMEVNSPE</sequence>
<protein>
    <recommendedName>
        <fullName>Uncharacterized protein MMP0618</fullName>
    </recommendedName>
</protein>
<organism>
    <name type="scientific">Methanococcus maripaludis (strain DSM 14266 / JCM 13030 / NBRC 101832 / S2 / LL)</name>
    <dbReference type="NCBI Taxonomy" id="267377"/>
    <lineage>
        <taxon>Archaea</taxon>
        <taxon>Methanobacteriati</taxon>
        <taxon>Methanobacteriota</taxon>
        <taxon>Methanomada group</taxon>
        <taxon>Methanococci</taxon>
        <taxon>Methanococcales</taxon>
        <taxon>Methanococcaceae</taxon>
        <taxon>Methanococcus</taxon>
    </lineage>
</organism>
<proteinExistence type="predicted"/>
<comment type="similarity">
    <text evidence="1">To M.jannaschii MJ1244 and MJ1245 and M.thermoautotrophicum MTH1110.</text>
</comment>
<dbReference type="EMBL" id="BX950229">
    <property type="protein sequence ID" value="CAF30174.1"/>
    <property type="molecule type" value="Genomic_DNA"/>
</dbReference>
<dbReference type="RefSeq" id="WP_011170562.1">
    <property type="nucleotide sequence ID" value="NC_005791.1"/>
</dbReference>
<dbReference type="SMR" id="P0CW49"/>
<dbReference type="STRING" id="267377.MMP0618"/>
<dbReference type="EnsemblBacteria" id="CAF30174">
    <property type="protein sequence ID" value="CAF30174"/>
    <property type="gene ID" value="MMP0618"/>
</dbReference>
<dbReference type="GeneID" id="2761307"/>
<dbReference type="KEGG" id="mmp:MMP0618"/>
<dbReference type="PATRIC" id="fig|267377.15.peg.633"/>
<dbReference type="eggNOG" id="arCOG03424">
    <property type="taxonomic scope" value="Archaea"/>
</dbReference>
<dbReference type="HOGENOM" id="CLU_145179_0_0_2"/>
<dbReference type="OrthoDB" id="146891at2157"/>
<dbReference type="Proteomes" id="UP000000590">
    <property type="component" value="Chromosome"/>
</dbReference>
<dbReference type="InterPro" id="IPR011322">
    <property type="entry name" value="N-reg_PII-like_a/b"/>
</dbReference>
<dbReference type="InterPro" id="IPR019296">
    <property type="entry name" value="Unchr_N-regulatory-PII-rel"/>
</dbReference>
<dbReference type="Pfam" id="PF10126">
    <property type="entry name" value="Nit_Regul_Hom"/>
    <property type="match status" value="1"/>
</dbReference>
<dbReference type="SUPFAM" id="SSF54913">
    <property type="entry name" value="GlnB-like"/>
    <property type="match status" value="1"/>
</dbReference>
<gene>
    <name type="ordered locus">MMP0618</name>
</gene>
<evidence type="ECO:0000305" key="1"/>
<name>Y618_METMP</name>
<keyword id="KW-1185">Reference proteome</keyword>
<accession>P0CW49</accession>
<accession>O50249</accession>
<feature type="chain" id="PRO_0000408201" description="Uncharacterized protein MMP0618">
    <location>
        <begin position="1"/>
        <end position="109"/>
    </location>
</feature>